<evidence type="ECO:0000255" key="1">
    <source>
        <dbReference type="HAMAP-Rule" id="MF_01416"/>
    </source>
</evidence>
<name>ATPD_RHOCS</name>
<feature type="chain" id="PRO_0000371098" description="ATP synthase subunit delta">
    <location>
        <begin position="1"/>
        <end position="186"/>
    </location>
</feature>
<keyword id="KW-0066">ATP synthesis</keyword>
<keyword id="KW-0997">Cell inner membrane</keyword>
<keyword id="KW-1003">Cell membrane</keyword>
<keyword id="KW-0139">CF(1)</keyword>
<keyword id="KW-0375">Hydrogen ion transport</keyword>
<keyword id="KW-0406">Ion transport</keyword>
<keyword id="KW-0472">Membrane</keyword>
<keyword id="KW-1185">Reference proteome</keyword>
<keyword id="KW-0813">Transport</keyword>
<proteinExistence type="inferred from homology"/>
<protein>
    <recommendedName>
        <fullName evidence="1">ATP synthase subunit delta</fullName>
    </recommendedName>
    <alternativeName>
        <fullName evidence="1">ATP synthase F(1) sector subunit delta</fullName>
    </alternativeName>
    <alternativeName>
        <fullName evidence="1">F-type ATPase subunit delta</fullName>
        <shortName evidence="1">F-ATPase subunit delta</shortName>
    </alternativeName>
</protein>
<accession>B6IPC9</accession>
<comment type="function">
    <text evidence="1">F(1)F(0) ATP synthase produces ATP from ADP in the presence of a proton or sodium gradient. F-type ATPases consist of two structural domains, F(1) containing the extramembraneous catalytic core and F(0) containing the membrane proton channel, linked together by a central stalk and a peripheral stalk. During catalysis, ATP synthesis in the catalytic domain of F(1) is coupled via a rotary mechanism of the central stalk subunits to proton translocation.</text>
</comment>
<comment type="function">
    <text evidence="1">This protein is part of the stalk that links CF(0) to CF(1). It either transmits conformational changes from CF(0) to CF(1) or is implicated in proton conduction.</text>
</comment>
<comment type="subunit">
    <text evidence="1">F-type ATPases have 2 components, F(1) - the catalytic core - and F(0) - the membrane proton channel. F(1) has five subunits: alpha(3), beta(3), gamma(1), delta(1), epsilon(1). CF(0) has four main subunits: a(1), b(1), b'(1) and c(10-14). The alpha and beta chains form an alternating ring which encloses part of the gamma chain. F(1) is attached to F(0) by a central stalk formed by the gamma and epsilon chains, while a peripheral stalk is formed by the delta, b and b' chains.</text>
</comment>
<comment type="subcellular location">
    <subcellularLocation>
        <location evidence="1">Cell inner membrane</location>
        <topology evidence="1">Peripheral membrane protein</topology>
    </subcellularLocation>
</comment>
<comment type="similarity">
    <text evidence="1">Belongs to the ATPase delta chain family.</text>
</comment>
<dbReference type="EMBL" id="CP000613">
    <property type="protein sequence ID" value="ACI99631.1"/>
    <property type="molecule type" value="Genomic_DNA"/>
</dbReference>
<dbReference type="RefSeq" id="WP_012567416.1">
    <property type="nucleotide sequence ID" value="NC_011420.2"/>
</dbReference>
<dbReference type="SMR" id="B6IPC9"/>
<dbReference type="STRING" id="414684.RC1_2244"/>
<dbReference type="KEGG" id="rce:RC1_2244"/>
<dbReference type="eggNOG" id="COG0712">
    <property type="taxonomic scope" value="Bacteria"/>
</dbReference>
<dbReference type="HOGENOM" id="CLU_085114_0_1_5"/>
<dbReference type="OrthoDB" id="9796185at2"/>
<dbReference type="Proteomes" id="UP000001591">
    <property type="component" value="Chromosome"/>
</dbReference>
<dbReference type="GO" id="GO:0005886">
    <property type="term" value="C:plasma membrane"/>
    <property type="evidence" value="ECO:0007669"/>
    <property type="project" value="UniProtKB-SubCell"/>
</dbReference>
<dbReference type="GO" id="GO:0045259">
    <property type="term" value="C:proton-transporting ATP synthase complex"/>
    <property type="evidence" value="ECO:0007669"/>
    <property type="project" value="UniProtKB-KW"/>
</dbReference>
<dbReference type="GO" id="GO:0046933">
    <property type="term" value="F:proton-transporting ATP synthase activity, rotational mechanism"/>
    <property type="evidence" value="ECO:0007669"/>
    <property type="project" value="UniProtKB-UniRule"/>
</dbReference>
<dbReference type="Gene3D" id="1.10.520.20">
    <property type="entry name" value="N-terminal domain of the delta subunit of the F1F0-ATP synthase"/>
    <property type="match status" value="1"/>
</dbReference>
<dbReference type="HAMAP" id="MF_01416">
    <property type="entry name" value="ATP_synth_delta_bact"/>
    <property type="match status" value="1"/>
</dbReference>
<dbReference type="InterPro" id="IPR026015">
    <property type="entry name" value="ATP_synth_OSCP/delta_N_sf"/>
</dbReference>
<dbReference type="InterPro" id="IPR020781">
    <property type="entry name" value="ATPase_OSCP/d_CS"/>
</dbReference>
<dbReference type="InterPro" id="IPR000711">
    <property type="entry name" value="ATPase_OSCP/dsu"/>
</dbReference>
<dbReference type="NCBIfam" id="TIGR01145">
    <property type="entry name" value="ATP_synt_delta"/>
    <property type="match status" value="1"/>
</dbReference>
<dbReference type="NCBIfam" id="NF004402">
    <property type="entry name" value="PRK05758.2-2"/>
    <property type="match status" value="1"/>
</dbReference>
<dbReference type="NCBIfam" id="NF004406">
    <property type="entry name" value="PRK05758.3-2"/>
    <property type="match status" value="1"/>
</dbReference>
<dbReference type="PANTHER" id="PTHR11910">
    <property type="entry name" value="ATP SYNTHASE DELTA CHAIN"/>
    <property type="match status" value="1"/>
</dbReference>
<dbReference type="Pfam" id="PF00213">
    <property type="entry name" value="OSCP"/>
    <property type="match status" value="1"/>
</dbReference>
<dbReference type="PRINTS" id="PR00125">
    <property type="entry name" value="ATPASEDELTA"/>
</dbReference>
<dbReference type="SUPFAM" id="SSF47928">
    <property type="entry name" value="N-terminal domain of the delta subunit of the F1F0-ATP synthase"/>
    <property type="match status" value="1"/>
</dbReference>
<dbReference type="PROSITE" id="PS00389">
    <property type="entry name" value="ATPASE_DELTA"/>
    <property type="match status" value="1"/>
</dbReference>
<organism>
    <name type="scientific">Rhodospirillum centenum (strain ATCC 51521 / SW)</name>
    <dbReference type="NCBI Taxonomy" id="414684"/>
    <lineage>
        <taxon>Bacteria</taxon>
        <taxon>Pseudomonadati</taxon>
        <taxon>Pseudomonadota</taxon>
        <taxon>Alphaproteobacteria</taxon>
        <taxon>Rhodospirillales</taxon>
        <taxon>Rhodospirillaceae</taxon>
        <taxon>Rhodospirillum</taxon>
    </lineage>
</organism>
<gene>
    <name evidence="1" type="primary">atpH</name>
    <name type="ordered locus">RC1_2244</name>
</gene>
<sequence>MATEGTGVSGLAARYATALFELADENKALDQTAQDLALLKQLMAESADLRRVVRSPLLSRSDQARAMDAVLAQVDVSGLVRQFVGLVARNRRLFALSGMIDGFLAELARRRGEQTARVVAARPLSQEQLDALTDALRRALGSKVSVDLRVDPSLIGGMVVKVGSRMIDSSVRTKLTKLKLAMKGVG</sequence>
<reference key="1">
    <citation type="submission" date="2007-03" db="EMBL/GenBank/DDBJ databases">
        <title>Genome sequence of Rhodospirillum centenum.</title>
        <authorList>
            <person name="Touchman J.W."/>
            <person name="Bauer C."/>
            <person name="Blankenship R.E."/>
        </authorList>
    </citation>
    <scope>NUCLEOTIDE SEQUENCE [LARGE SCALE GENOMIC DNA]</scope>
    <source>
        <strain>ATCC 51521 / SW</strain>
    </source>
</reference>